<sequence length="420" mass="45684">MSQPQMSPEKEQELASKILHRAELAQMTRQLKLGLSNVPSTKRKQDSTTKKRSGEDAEDVDEDHKTLLEAISPAKKPLHDDTNKMTVISPVKFVEKPNTPPSSRQRKAEDRSQQIKPRKEDTPSTPRASATPIILPHASSHYQRPHDKNFMTPKRNNNNSSNHSNNNNNIKKKAAGSKDAPQDSDNTAGADLLMYLATSPYNKSSHHGTPMAVRMPTTPRSYHYASQLSLNGNTASTSNDAVRFSHIKPSASSPQSTFKSNLLPNFPDESLMDSPSLYLSNNNGSVQATLSPQQRRKPTTNTLHPPSNVPTTPSRELNGTNFNLLRTPNFNMGDYLHNLFSPSPRVPAQQGASNTSASIPSVPAMVPGSSSNTSAIATAAISSHTTNNFLDMNANGIPLIVGPGTDRIGEGESIDDKLTD</sequence>
<reference key="1">
    <citation type="journal article" date="1997" name="Mol. Gen. Genet.">
        <title>Identification of the Saccharomyces cerevisiae genes STB1-STB5 encoding Sin3p binding proteins.</title>
        <authorList>
            <person name="Kasten M.M."/>
            <person name="Stillman D.J."/>
        </authorList>
    </citation>
    <scope>NUCLEOTIDE SEQUENCE [GENOMIC DNA]</scope>
    <scope>INTERACTION WITH SIN3</scope>
</reference>
<reference key="2">
    <citation type="journal article" date="1995" name="Yeast">
        <title>Sequencing analysis of a 24.7 kb fragment of yeast chromosome XIV identifies six known genes, a new member of the hexose transporter family and ten new open reading frames.</title>
        <authorList>
            <person name="Maftahi M."/>
            <person name="Nicaud J.-M."/>
            <person name="Levesque H."/>
            <person name="Gaillardin C."/>
        </authorList>
    </citation>
    <scope>NUCLEOTIDE SEQUENCE [GENOMIC DNA]</scope>
    <source>
        <strain>S288c / FY1676</strain>
    </source>
</reference>
<reference key="3">
    <citation type="journal article" date="1997" name="Nature">
        <title>The nucleotide sequence of Saccharomyces cerevisiae chromosome XIV and its evolutionary implications.</title>
        <authorList>
            <person name="Philippsen P."/>
            <person name="Kleine K."/>
            <person name="Poehlmann R."/>
            <person name="Duesterhoeft A."/>
            <person name="Hamberg K."/>
            <person name="Hegemann J.H."/>
            <person name="Obermaier B."/>
            <person name="Urrestarazu L.A."/>
            <person name="Aert R."/>
            <person name="Albermann K."/>
            <person name="Altmann R."/>
            <person name="Andre B."/>
            <person name="Baladron V."/>
            <person name="Ballesta J.P.G."/>
            <person name="Becam A.-M."/>
            <person name="Beinhauer J.D."/>
            <person name="Boskovic J."/>
            <person name="Buitrago M.J."/>
            <person name="Bussereau F."/>
            <person name="Coster F."/>
            <person name="Crouzet M."/>
            <person name="D'Angelo M."/>
            <person name="Dal Pero F."/>
            <person name="De Antoni A."/>
            <person name="del Rey F."/>
            <person name="Doignon F."/>
            <person name="Domdey H."/>
            <person name="Dubois E."/>
            <person name="Fiedler T.A."/>
            <person name="Fleig U."/>
            <person name="Floeth M."/>
            <person name="Fritz C."/>
            <person name="Gaillardin C."/>
            <person name="Garcia-Cantalejo J.M."/>
            <person name="Glansdorff N."/>
            <person name="Goffeau A."/>
            <person name="Gueldener U."/>
            <person name="Herbert C.J."/>
            <person name="Heumann K."/>
            <person name="Heuss-Neitzel D."/>
            <person name="Hilbert H."/>
            <person name="Hinni K."/>
            <person name="Iraqui Houssaini I."/>
            <person name="Jacquet M."/>
            <person name="Jimenez A."/>
            <person name="Jonniaux J.-L."/>
            <person name="Karpfinger-Hartl L."/>
            <person name="Lanfranchi G."/>
            <person name="Lepingle A."/>
            <person name="Levesque H."/>
            <person name="Lyck R."/>
            <person name="Maftahi M."/>
            <person name="Mallet L."/>
            <person name="Maurer C.T.C."/>
            <person name="Messenguy F."/>
            <person name="Mewes H.-W."/>
            <person name="Moestl D."/>
            <person name="Nasr F."/>
            <person name="Nicaud J.-M."/>
            <person name="Niedenthal R.K."/>
            <person name="Pandolfo D."/>
            <person name="Pierard A."/>
            <person name="Piravandi E."/>
            <person name="Planta R.J."/>
            <person name="Pohl T.M."/>
            <person name="Purnelle B."/>
            <person name="Rebischung C."/>
            <person name="Remacha M.A."/>
            <person name="Revuelta J.L."/>
            <person name="Rinke M."/>
            <person name="Saiz J.E."/>
            <person name="Sartorello F."/>
            <person name="Scherens B."/>
            <person name="Sen-Gupta M."/>
            <person name="Soler-Mira A."/>
            <person name="Urbanus J.H.M."/>
            <person name="Valle G."/>
            <person name="Van Dyck L."/>
            <person name="Verhasselt P."/>
            <person name="Vierendeels F."/>
            <person name="Vissers S."/>
            <person name="Voet M."/>
            <person name="Volckaert G."/>
            <person name="Wach A."/>
            <person name="Wambutt R."/>
            <person name="Wedler H."/>
            <person name="Zollner A."/>
            <person name="Hani J."/>
        </authorList>
    </citation>
    <scope>NUCLEOTIDE SEQUENCE [LARGE SCALE GENOMIC DNA]</scope>
    <source>
        <strain>ATCC 204508 / S288c</strain>
    </source>
</reference>
<reference key="4">
    <citation type="journal article" date="2014" name="G3 (Bethesda)">
        <title>The reference genome sequence of Saccharomyces cerevisiae: Then and now.</title>
        <authorList>
            <person name="Engel S.R."/>
            <person name="Dietrich F.S."/>
            <person name="Fisk D.G."/>
            <person name="Binkley G."/>
            <person name="Balakrishnan R."/>
            <person name="Costanzo M.C."/>
            <person name="Dwight S.S."/>
            <person name="Hitz B.C."/>
            <person name="Karra K."/>
            <person name="Nash R.S."/>
            <person name="Weng S."/>
            <person name="Wong E.D."/>
            <person name="Lloyd P."/>
            <person name="Skrzypek M.S."/>
            <person name="Miyasato S.R."/>
            <person name="Simison M."/>
            <person name="Cherry J.M."/>
        </authorList>
    </citation>
    <scope>GENOME REANNOTATION</scope>
    <source>
        <strain>ATCC 204508 / S288c</strain>
    </source>
</reference>
<reference key="5">
    <citation type="journal article" date="1999" name="Mol. Cell. Biol.">
        <title>Regulation of transcription at the Saccharomyces cerevisiae start transition by Stb1, a Swi6-binding protein.</title>
        <authorList>
            <person name="Ho Y."/>
            <person name="Costanzo M."/>
            <person name="Moore L."/>
            <person name="Kobayashi R."/>
            <person name="Andrews B.J."/>
        </authorList>
    </citation>
    <scope>PROTEIN SEQUENCE OF 249-259</scope>
    <scope>INTERACTION WITH SWI6</scope>
    <scope>PHOSPHORYLATION BY CDC28</scope>
</reference>
<reference key="6">
    <citation type="journal article" date="2003" name="Mol. Cell. Biol.">
        <title>G1 transcription factors are differentially regulated in Saccharomyces cerevisiae by the Swi6-binding protein Stb1.</title>
        <authorList>
            <person name="Costanzo M."/>
            <person name="Schub O."/>
            <person name="Andrews B.J."/>
        </authorList>
    </citation>
    <scope>FUNCTION</scope>
    <scope>INTERACTION WITH SWI6</scope>
</reference>
<reference key="7">
    <citation type="journal article" date="2003" name="Nature">
        <title>Sequencing and comparison of yeast species to identify genes and regulatory elements.</title>
        <authorList>
            <person name="Kellis M."/>
            <person name="Patterson N."/>
            <person name="Endrizzi M."/>
            <person name="Birren B.W."/>
            <person name="Lander E.S."/>
        </authorList>
    </citation>
    <scope>IDENTIFICATION OF PROBABLE INITIATION SITE</scope>
</reference>
<reference key="8">
    <citation type="journal article" date="2003" name="Nature">
        <title>Global analysis of protein localization in budding yeast.</title>
        <authorList>
            <person name="Huh W.-K."/>
            <person name="Falvo J.V."/>
            <person name="Gerke L.C."/>
            <person name="Carroll A.S."/>
            <person name="Howson R.W."/>
            <person name="Weissman J.S."/>
            <person name="O'Shea E.K."/>
        </authorList>
    </citation>
    <scope>SUBCELLULAR LOCATION [LARGE SCALE ANALYSIS]</scope>
</reference>
<reference key="9">
    <citation type="journal article" date="2003" name="Nature">
        <title>Global analysis of protein expression in yeast.</title>
        <authorList>
            <person name="Ghaemmaghami S."/>
            <person name="Huh W.-K."/>
            <person name="Bower K."/>
            <person name="Howson R.W."/>
            <person name="Belle A."/>
            <person name="Dephoure N."/>
            <person name="O'Shea E.K."/>
            <person name="Weissman J.S."/>
        </authorList>
    </citation>
    <scope>LEVEL OF PROTEIN EXPRESSION [LARGE SCALE ANALYSIS]</scope>
</reference>
<reference key="10">
    <citation type="journal article" date="2003" name="Nature">
        <title>Targets of the cyclin-dependent kinase Cdk1.</title>
        <authorList>
            <person name="Ubersax J.A."/>
            <person name="Woodbury E.L."/>
            <person name="Quang P.N."/>
            <person name="Paraz M."/>
            <person name="Blethrow J.D."/>
            <person name="Shah K."/>
            <person name="Shokat K.M."/>
            <person name="Morgan D.O."/>
        </authorList>
    </citation>
    <scope>PHOSPHORYLATION BY CDC28</scope>
</reference>
<reference key="11">
    <citation type="journal article" date="2005" name="Mol. Cell. Proteomics">
        <title>Quantitative phosphoproteomics applied to the yeast pheromone signaling pathway.</title>
        <authorList>
            <person name="Gruhler A."/>
            <person name="Olsen J.V."/>
            <person name="Mohammed S."/>
            <person name="Mortensen P."/>
            <person name="Faergeman N.J."/>
            <person name="Mann M."/>
            <person name="Jensen O.N."/>
        </authorList>
    </citation>
    <scope>ACETYLATION [LARGE SCALE ANALYSIS] AT SER-2</scope>
    <scope>PHOSPHORYLATION [LARGE SCALE ANALYSIS] AT SER-7</scope>
    <scope>CLEAVAGE OF INITIATOR METHIONINE [LARGE SCALE ANALYSIS]</scope>
    <scope>IDENTIFICATION BY MASS SPECTROMETRY [LARGE SCALE ANALYSIS]</scope>
    <source>
        <strain>YAL6B</strain>
    </source>
</reference>
<reference key="12">
    <citation type="journal article" date="2007" name="Proc. Natl. Acad. Sci. U.S.A.">
        <title>Analysis of phosphorylation sites on proteins from Saccharomyces cerevisiae by electron transfer dissociation (ETD) mass spectrometry.</title>
        <authorList>
            <person name="Chi A."/>
            <person name="Huttenhower C."/>
            <person name="Geer L.Y."/>
            <person name="Coon J.J."/>
            <person name="Syka J.E.P."/>
            <person name="Bai D.L."/>
            <person name="Shabanowitz J."/>
            <person name="Burke D.J."/>
            <person name="Troyanskaya O.G."/>
            <person name="Hunt D.F."/>
        </authorList>
    </citation>
    <scope>PHOSPHORYLATION [LARGE SCALE ANALYSIS] AT THR-99</scope>
    <scope>IDENTIFICATION BY MASS SPECTROMETRY [LARGE SCALE ANALYSIS]</scope>
</reference>
<reference key="13">
    <citation type="journal article" date="2008" name="Mol. Cell. Proteomics">
        <title>A multidimensional chromatography technology for in-depth phosphoproteome analysis.</title>
        <authorList>
            <person name="Albuquerque C.P."/>
            <person name="Smolka M.B."/>
            <person name="Payne S.H."/>
            <person name="Bafna V."/>
            <person name="Eng J."/>
            <person name="Zhou H."/>
        </authorList>
    </citation>
    <scope>PHOSPHORYLATION [LARGE SCALE ANALYSIS] AT THR-99 AND THR-419</scope>
    <scope>IDENTIFICATION BY MASS SPECTROMETRY [LARGE SCALE ANALYSIS]</scope>
</reference>
<reference key="14">
    <citation type="journal article" date="2009" name="Science">
        <title>Global analysis of Cdk1 substrate phosphorylation sites provides insights into evolution.</title>
        <authorList>
            <person name="Holt L.J."/>
            <person name="Tuch B.B."/>
            <person name="Villen J."/>
            <person name="Johnson A.D."/>
            <person name="Gygi S.P."/>
            <person name="Morgan D.O."/>
        </authorList>
    </citation>
    <scope>PHOSPHORYLATION [LARGE SCALE ANALYSIS] AT SER-72; THR-99 AND SER-102</scope>
    <scope>IDENTIFICATION BY MASS SPECTROMETRY [LARGE SCALE ANALYSIS]</scope>
</reference>
<keyword id="KW-0007">Acetylation</keyword>
<keyword id="KW-0963">Cytoplasm</keyword>
<keyword id="KW-0903">Direct protein sequencing</keyword>
<keyword id="KW-0539">Nucleus</keyword>
<keyword id="KW-0597">Phosphoprotein</keyword>
<keyword id="KW-1185">Reference proteome</keyword>
<accession>P42845</accession>
<accession>D6W0N6</accession>
<evidence type="ECO:0000256" key="1">
    <source>
        <dbReference type="SAM" id="MobiDB-lite"/>
    </source>
</evidence>
<evidence type="ECO:0000269" key="2">
    <source>
    </source>
</evidence>
<evidence type="ECO:0000269" key="3">
    <source>
    </source>
</evidence>
<evidence type="ECO:0000269" key="4">
    <source>
    </source>
</evidence>
<evidence type="ECO:0000269" key="5">
    <source>
    </source>
</evidence>
<evidence type="ECO:0000269" key="6">
    <source>
    </source>
</evidence>
<evidence type="ECO:0000269" key="7">
    <source>
    </source>
</evidence>
<evidence type="ECO:0000305" key="8"/>
<evidence type="ECO:0007744" key="9">
    <source>
    </source>
</evidence>
<evidence type="ECO:0007744" key="10">
    <source>
    </source>
</evidence>
<evidence type="ECO:0007744" key="11">
    <source>
    </source>
</evidence>
<evidence type="ECO:0007744" key="12">
    <source>
    </source>
</evidence>
<gene>
    <name type="primary">STB1</name>
    <name type="ordered locus">YNL309W</name>
    <name type="ORF">N0384</name>
</gene>
<feature type="initiator methionine" description="Removed" evidence="9">
    <location>
        <position position="1"/>
    </location>
</feature>
<feature type="chain" id="PRO_0000072251" description="Protein STB1">
    <location>
        <begin position="2"/>
        <end position="420"/>
    </location>
</feature>
<feature type="region of interest" description="Interaction with SWI6">
    <location>
        <begin position="2"/>
        <end position="70"/>
    </location>
</feature>
<feature type="region of interest" description="Disordered" evidence="1">
    <location>
        <begin position="30"/>
        <end position="187"/>
    </location>
</feature>
<feature type="region of interest" description="Disordered" evidence="1">
    <location>
        <begin position="273"/>
        <end position="319"/>
    </location>
</feature>
<feature type="compositionally biased region" description="Basic and acidic residues" evidence="1">
    <location>
        <begin position="43"/>
        <end position="55"/>
    </location>
</feature>
<feature type="compositionally biased region" description="Basic and acidic residues" evidence="1">
    <location>
        <begin position="106"/>
        <end position="122"/>
    </location>
</feature>
<feature type="compositionally biased region" description="Low complexity" evidence="1">
    <location>
        <begin position="156"/>
        <end position="169"/>
    </location>
</feature>
<feature type="compositionally biased region" description="Polar residues" evidence="1">
    <location>
        <begin position="277"/>
        <end position="319"/>
    </location>
</feature>
<feature type="modified residue" description="N-acetylserine" evidence="9">
    <location>
        <position position="2"/>
    </location>
</feature>
<feature type="modified residue" description="Phosphoserine" evidence="9">
    <location>
        <position position="7"/>
    </location>
</feature>
<feature type="modified residue" description="Phosphoserine" evidence="12">
    <location>
        <position position="72"/>
    </location>
</feature>
<feature type="modified residue" description="Phosphothreonine" evidence="10 11 12">
    <location>
        <position position="99"/>
    </location>
</feature>
<feature type="modified residue" description="Phosphoserine" evidence="12">
    <location>
        <position position="102"/>
    </location>
</feature>
<feature type="modified residue" description="Phosphothreonine" evidence="11">
    <location>
        <position position="419"/>
    </location>
</feature>
<organism>
    <name type="scientific">Saccharomyces cerevisiae (strain ATCC 204508 / S288c)</name>
    <name type="common">Baker's yeast</name>
    <dbReference type="NCBI Taxonomy" id="559292"/>
    <lineage>
        <taxon>Eukaryota</taxon>
        <taxon>Fungi</taxon>
        <taxon>Dikarya</taxon>
        <taxon>Ascomycota</taxon>
        <taxon>Saccharomycotina</taxon>
        <taxon>Saccharomycetes</taxon>
        <taxon>Saccharomycetales</taxon>
        <taxon>Saccharomycetaceae</taxon>
        <taxon>Saccharomyces</taxon>
    </lineage>
</organism>
<dbReference type="EMBL" id="U33439">
    <property type="protein sequence ID" value="AAA75482.1"/>
    <property type="status" value="ALT_INIT"/>
    <property type="molecule type" value="Genomic_DNA"/>
</dbReference>
<dbReference type="EMBL" id="Z46259">
    <property type="protein sequence ID" value="CAA86386.1"/>
    <property type="status" value="ALT_INIT"/>
    <property type="molecule type" value="Genomic_DNA"/>
</dbReference>
<dbReference type="EMBL" id="Z71585">
    <property type="protein sequence ID" value="CAA96238.1"/>
    <property type="status" value="ALT_INIT"/>
    <property type="molecule type" value="Genomic_DNA"/>
</dbReference>
<dbReference type="EMBL" id="BK006947">
    <property type="protein sequence ID" value="DAA10252.1"/>
    <property type="molecule type" value="Genomic_DNA"/>
</dbReference>
<dbReference type="PIR" id="S51302">
    <property type="entry name" value="S51302"/>
</dbReference>
<dbReference type="RefSeq" id="NP_014090.2">
    <property type="nucleotide sequence ID" value="NM_001183147.1"/>
</dbReference>
<dbReference type="SMR" id="P42845"/>
<dbReference type="BioGRID" id="35530">
    <property type="interactions" value="114"/>
</dbReference>
<dbReference type="DIP" id="DIP-2485N"/>
<dbReference type="FunCoup" id="P42845">
    <property type="interactions" value="108"/>
</dbReference>
<dbReference type="IntAct" id="P42845">
    <property type="interactions" value="6"/>
</dbReference>
<dbReference type="MINT" id="P42845"/>
<dbReference type="STRING" id="4932.YNL309W"/>
<dbReference type="GlyGen" id="P42845">
    <property type="glycosylation" value="1 site, 1 O-linked glycan (1 site)"/>
</dbReference>
<dbReference type="iPTMnet" id="P42845"/>
<dbReference type="PaxDb" id="4932-YNL309W"/>
<dbReference type="PeptideAtlas" id="P42845"/>
<dbReference type="EnsemblFungi" id="YNL309W_mRNA">
    <property type="protein sequence ID" value="YNL309W"/>
    <property type="gene ID" value="YNL309W"/>
</dbReference>
<dbReference type="GeneID" id="855407"/>
<dbReference type="KEGG" id="sce:YNL309W"/>
<dbReference type="AGR" id="SGD:S000005253"/>
<dbReference type="SGD" id="S000005253">
    <property type="gene designation" value="STB1"/>
</dbReference>
<dbReference type="VEuPathDB" id="FungiDB:YNL309W"/>
<dbReference type="eggNOG" id="ENOG502S5ZX">
    <property type="taxonomic scope" value="Eukaryota"/>
</dbReference>
<dbReference type="HOGENOM" id="CLU_048305_0_0_1"/>
<dbReference type="InParanoid" id="P42845"/>
<dbReference type="OMA" id="NMNDYVH"/>
<dbReference type="OrthoDB" id="2163387at2759"/>
<dbReference type="BioCyc" id="YEAST:G3O-33296-MONOMER"/>
<dbReference type="BioGRID-ORCS" id="855407">
    <property type="hits" value="8 hits in 10 CRISPR screens"/>
</dbReference>
<dbReference type="PRO" id="PR:P42845"/>
<dbReference type="Proteomes" id="UP000002311">
    <property type="component" value="Chromosome XIV"/>
</dbReference>
<dbReference type="RNAct" id="P42845">
    <property type="molecule type" value="protein"/>
</dbReference>
<dbReference type="GO" id="GO:0005737">
    <property type="term" value="C:cytoplasm"/>
    <property type="evidence" value="ECO:0007005"/>
    <property type="project" value="SGD"/>
</dbReference>
<dbReference type="GO" id="GO:0030907">
    <property type="term" value="C:MBF transcription complex"/>
    <property type="evidence" value="ECO:0000314"/>
    <property type="project" value="SGD"/>
</dbReference>
<dbReference type="GO" id="GO:0005634">
    <property type="term" value="C:nucleus"/>
    <property type="evidence" value="ECO:0007005"/>
    <property type="project" value="SGD"/>
</dbReference>
<dbReference type="GO" id="GO:0033309">
    <property type="term" value="C:SBF transcription complex"/>
    <property type="evidence" value="ECO:0000314"/>
    <property type="project" value="SGD"/>
</dbReference>
<dbReference type="GO" id="GO:0070822">
    <property type="term" value="C:Sin3-type complex"/>
    <property type="evidence" value="ECO:0000314"/>
    <property type="project" value="SGD"/>
</dbReference>
<dbReference type="GO" id="GO:0003713">
    <property type="term" value="F:transcription coactivator activity"/>
    <property type="evidence" value="ECO:0000353"/>
    <property type="project" value="SGD"/>
</dbReference>
<dbReference type="GO" id="GO:0000082">
    <property type="term" value="P:G1/S transition of mitotic cell cycle"/>
    <property type="evidence" value="ECO:0000315"/>
    <property type="project" value="SGD"/>
</dbReference>
<dbReference type="GO" id="GO:0031496">
    <property type="term" value="P:positive regulation of mating type switching"/>
    <property type="evidence" value="ECO:0000316"/>
    <property type="project" value="SGD"/>
</dbReference>
<dbReference type="GO" id="GO:0045944">
    <property type="term" value="P:positive regulation of transcription by RNA polymerase II"/>
    <property type="evidence" value="ECO:0000316"/>
    <property type="project" value="SGD"/>
</dbReference>
<dbReference type="GO" id="GO:0006357">
    <property type="term" value="P:regulation of transcription by RNA polymerase II"/>
    <property type="evidence" value="ECO:0000315"/>
    <property type="project" value="SGD"/>
</dbReference>
<proteinExistence type="evidence at protein level"/>
<comment type="function">
    <text evidence="3">Involved in the regulation and timing of MBF-dependent transcription in late G1 of the cell cycle.</text>
</comment>
<comment type="subunit">
    <text evidence="2 3 7">Interacts with the ANK repeats of SWI6. The interaction with SWI6 is required for function. Interacts with SIN3.</text>
</comment>
<comment type="subcellular location">
    <subcellularLocation>
        <location evidence="4">Cytoplasm</location>
    </subcellularLocation>
    <subcellularLocation>
        <location evidence="4">Nucleus</location>
    </subcellularLocation>
</comment>
<comment type="PTM">
    <text evidence="2 6">Phosphorylated by CDC28 in a cell cycle-dependent manner, inhibiting the interaction with SWI6.</text>
</comment>
<comment type="miscellaneous">
    <text evidence="5">Present with 319 molecules/cell in log phase SD medium.</text>
</comment>
<comment type="sequence caution" evidence="8">
    <conflict type="erroneous initiation">
        <sequence resource="EMBL-CDS" id="AAA75482"/>
    </conflict>
</comment>
<comment type="sequence caution" evidence="8">
    <conflict type="erroneous initiation">
        <sequence resource="EMBL-CDS" id="CAA86386"/>
    </conflict>
</comment>
<comment type="sequence caution" evidence="8">
    <conflict type="erroneous initiation">
        <sequence resource="EMBL-CDS" id="CAA96238"/>
    </conflict>
</comment>
<protein>
    <recommendedName>
        <fullName>Protein STB1</fullName>
    </recommendedName>
    <alternativeName>
        <fullName>SIN3-binding protein 1</fullName>
    </alternativeName>
</protein>
<name>STB1_YEAST</name>